<dbReference type="EC" id="2.5.1.86"/>
<dbReference type="EC" id="2.5.1.87"/>
<dbReference type="EMBL" id="AE000516">
    <property type="protein sequence ID" value="AAK46724.1"/>
    <property type="molecule type" value="Genomic_DNA"/>
</dbReference>
<dbReference type="PIR" id="H70585">
    <property type="entry name" value="H70585"/>
</dbReference>
<dbReference type="RefSeq" id="WP_003412212.1">
    <property type="nucleotide sequence ID" value="NZ_KK341227.1"/>
</dbReference>
<dbReference type="SMR" id="P9WFF6"/>
<dbReference type="BindingDB" id="P9WFF6"/>
<dbReference type="KEGG" id="mtc:MT2430"/>
<dbReference type="PATRIC" id="fig|83331.31.peg.2618"/>
<dbReference type="HOGENOM" id="CLU_038505_1_2_11"/>
<dbReference type="Proteomes" id="UP000001020">
    <property type="component" value="Chromosome"/>
</dbReference>
<dbReference type="GO" id="GO:0005829">
    <property type="term" value="C:cytosol"/>
    <property type="evidence" value="ECO:0007669"/>
    <property type="project" value="TreeGrafter"/>
</dbReference>
<dbReference type="GO" id="GO:0005886">
    <property type="term" value="C:plasma membrane"/>
    <property type="evidence" value="ECO:0007669"/>
    <property type="project" value="UniProtKB-SubCell"/>
</dbReference>
<dbReference type="GO" id="GO:0008834">
    <property type="term" value="F:ditrans,polycis-undecaprenyl-diphosphate synthase [(2E,6E)-farnesyl-diphosphate specific] activity"/>
    <property type="evidence" value="ECO:0007669"/>
    <property type="project" value="TreeGrafter"/>
</dbReference>
<dbReference type="GO" id="GO:0000287">
    <property type="term" value="F:magnesium ion binding"/>
    <property type="evidence" value="ECO:0007669"/>
    <property type="project" value="UniProtKB-UniRule"/>
</dbReference>
<dbReference type="GO" id="GO:0030145">
    <property type="term" value="F:manganese ion binding"/>
    <property type="evidence" value="ECO:0007669"/>
    <property type="project" value="TreeGrafter"/>
</dbReference>
<dbReference type="GO" id="GO:0033850">
    <property type="term" value="F:Z-farnesyl diphosphate synthase activity"/>
    <property type="evidence" value="ECO:0007669"/>
    <property type="project" value="TreeGrafter"/>
</dbReference>
<dbReference type="GO" id="GO:0016094">
    <property type="term" value="P:polyprenol biosynthetic process"/>
    <property type="evidence" value="ECO:0007669"/>
    <property type="project" value="TreeGrafter"/>
</dbReference>
<dbReference type="CDD" id="cd00475">
    <property type="entry name" value="Cis_IPPS"/>
    <property type="match status" value="1"/>
</dbReference>
<dbReference type="FunFam" id="3.40.1180.10:FF:000004">
    <property type="entry name" value="Isoprenyl transferase"/>
    <property type="match status" value="1"/>
</dbReference>
<dbReference type="Gene3D" id="3.40.1180.10">
    <property type="entry name" value="Decaprenyl diphosphate synthase-like"/>
    <property type="match status" value="1"/>
</dbReference>
<dbReference type="HAMAP" id="MF_01139">
    <property type="entry name" value="ISPT"/>
    <property type="match status" value="1"/>
</dbReference>
<dbReference type="InterPro" id="IPR001441">
    <property type="entry name" value="UPP_synth-like"/>
</dbReference>
<dbReference type="InterPro" id="IPR018520">
    <property type="entry name" value="UPP_synth-like_CS"/>
</dbReference>
<dbReference type="InterPro" id="IPR036424">
    <property type="entry name" value="UPP_synth-like_sf"/>
</dbReference>
<dbReference type="NCBIfam" id="NF011402">
    <property type="entry name" value="PRK14827.1"/>
    <property type="match status" value="1"/>
</dbReference>
<dbReference type="NCBIfam" id="NF011404">
    <property type="entry name" value="PRK14829.1"/>
    <property type="match status" value="1"/>
</dbReference>
<dbReference type="NCBIfam" id="TIGR00055">
    <property type="entry name" value="uppS"/>
    <property type="match status" value="1"/>
</dbReference>
<dbReference type="PANTHER" id="PTHR10291:SF0">
    <property type="entry name" value="DEHYDRODOLICHYL DIPHOSPHATE SYNTHASE 2"/>
    <property type="match status" value="1"/>
</dbReference>
<dbReference type="PANTHER" id="PTHR10291">
    <property type="entry name" value="DEHYDRODOLICHYL DIPHOSPHATE SYNTHASE FAMILY MEMBER"/>
    <property type="match status" value="1"/>
</dbReference>
<dbReference type="Pfam" id="PF01255">
    <property type="entry name" value="Prenyltransf"/>
    <property type="match status" value="1"/>
</dbReference>
<dbReference type="SUPFAM" id="SSF64005">
    <property type="entry name" value="Undecaprenyl diphosphate synthase"/>
    <property type="match status" value="1"/>
</dbReference>
<dbReference type="PROSITE" id="PS01066">
    <property type="entry name" value="UPP_SYNTHASE"/>
    <property type="match status" value="1"/>
</dbReference>
<evidence type="ECO:0000250" key="1"/>
<evidence type="ECO:0000256" key="2">
    <source>
        <dbReference type="SAM" id="MobiDB-lite"/>
    </source>
</evidence>
<evidence type="ECO:0000305" key="3"/>
<proteinExistence type="inferred from homology"/>
<feature type="chain" id="PRO_0000428547" description="Decaprenyl diphosphate synthase">
    <location>
        <begin position="1"/>
        <end position="296"/>
    </location>
</feature>
<feature type="region of interest" description="Disordered" evidence="2">
    <location>
        <begin position="1"/>
        <end position="24"/>
    </location>
</feature>
<feature type="active site" evidence="1">
    <location>
        <position position="76"/>
    </location>
</feature>
<feature type="active site" description="Proton acceptor" evidence="1">
    <location>
        <position position="124"/>
    </location>
</feature>
<feature type="binding site" evidence="1">
    <location>
        <begin position="76"/>
        <end position="80"/>
    </location>
    <ligand>
        <name>substrate</name>
    </ligand>
</feature>
<feature type="binding site" evidence="1">
    <location>
        <position position="76"/>
    </location>
    <ligand>
        <name>Mg(2+)</name>
        <dbReference type="ChEBI" id="CHEBI:18420"/>
    </ligand>
</feature>
<feature type="binding site" evidence="1">
    <location>
        <position position="81"/>
    </location>
    <ligand>
        <name>substrate</name>
    </ligand>
</feature>
<feature type="binding site" evidence="1">
    <location>
        <position position="89"/>
    </location>
    <ligand>
        <name>substrate</name>
    </ligand>
</feature>
<feature type="binding site" evidence="1">
    <location>
        <position position="93"/>
    </location>
    <ligand>
        <name>substrate</name>
    </ligand>
</feature>
<feature type="binding site" evidence="1">
    <location>
        <begin position="121"/>
        <end position="124"/>
    </location>
    <ligand>
        <name>substrate</name>
    </ligand>
</feature>
<feature type="binding site" evidence="1">
    <location>
        <position position="125"/>
    </location>
    <ligand>
        <name>substrate</name>
    </ligand>
</feature>
<feature type="binding site" evidence="1">
    <location>
        <position position="127"/>
    </location>
    <ligand>
        <name>substrate</name>
    </ligand>
</feature>
<feature type="binding site" evidence="1">
    <location>
        <position position="168"/>
    </location>
    <ligand>
        <name>substrate</name>
    </ligand>
</feature>
<feature type="binding site" evidence="1">
    <location>
        <position position="244"/>
    </location>
    <ligand>
        <name>substrate</name>
    </ligand>
</feature>
<feature type="binding site" evidence="1">
    <location>
        <begin position="250"/>
        <end position="252"/>
    </location>
    <ligand>
        <name>substrate</name>
    </ligand>
</feature>
<feature type="binding site" evidence="1">
    <location>
        <position position="263"/>
    </location>
    <ligand>
        <name>Mg(2+)</name>
        <dbReference type="ChEBI" id="CHEBI:18420"/>
    </ligand>
</feature>
<feature type="binding site" evidence="1">
    <location>
        <begin position="292"/>
        <end position="294"/>
    </location>
    <ligand>
        <name>substrate</name>
    </ligand>
</feature>
<name>DPDS_MYCTO</name>
<protein>
    <recommendedName>
        <fullName>Decaprenyl diphosphate synthase</fullName>
        <shortName>DecaPP</shortName>
        <ecNumber>2.5.1.86</ecNumber>
        <ecNumber>2.5.1.87</ecNumber>
    </recommendedName>
    <alternativeName>
        <fullName>Decaprenyl pyrophosphate synthase</fullName>
    </alternativeName>
    <alternativeName>
        <fullName>Long-chain isoprenyl diphosphate synthase</fullName>
    </alternativeName>
    <alternativeName>
        <fullName>Trans,polycis-decaprenyl diphosphate synthase</fullName>
    </alternativeName>
</protein>
<accession>P9WFF6</accession>
<accession>L0T9E4</accession>
<accession>O05837</accession>
<accession>P60479</accession>
<gene>
    <name type="primary">uppS</name>
    <name type="ordered locus">MT2430</name>
</gene>
<organism>
    <name type="scientific">Mycobacterium tuberculosis (strain CDC 1551 / Oshkosh)</name>
    <dbReference type="NCBI Taxonomy" id="83331"/>
    <lineage>
        <taxon>Bacteria</taxon>
        <taxon>Bacillati</taxon>
        <taxon>Actinomycetota</taxon>
        <taxon>Actinomycetes</taxon>
        <taxon>Mycobacteriales</taxon>
        <taxon>Mycobacteriaceae</taxon>
        <taxon>Mycobacterium</taxon>
        <taxon>Mycobacterium tuberculosis complex</taxon>
    </lineage>
</organism>
<sequence length="296" mass="33791">MARDARKRTSSNFPQLPPAPDDYPTFPDTSTWPVVFPELPAAPYGGPCRPPQHTSKAAAPRIPADRLPNHVAIVMDGNGRWATQRGLARTEGHKMGEAVVIDIACGAIELGIKWLSLYAFSTENWKRSPEEVRFLMGFNRDVVRRRRDTLKKLGVRIRWVGSRPRLWRSVINELAVAEEMTKSNDVITINYCVNYGGRTEITEATREIAREVAAGRLNPERITESTIARHLQRPDIPDVDLFLRTSGEQRSSNFMLWQAAYAEYIFQDKLWPDYDRRDLWAACEEYASRTRRFGSA</sequence>
<keyword id="KW-1003">Cell membrane</keyword>
<keyword id="KW-0460">Magnesium</keyword>
<keyword id="KW-0472">Membrane</keyword>
<keyword id="KW-0479">Metal-binding</keyword>
<keyword id="KW-1185">Reference proteome</keyword>
<keyword id="KW-0808">Transferase</keyword>
<comment type="function">
    <text>Catalyzes the sequential condensation of isopentenyl diphosphate (IPP) in the cis configuration with (2Z,6E)-farnesyl diphosphate (Z-FPP or EZ-FPP) generating the 50 carbon product trans,polycis-decaprenyl diphosphate.</text>
</comment>
<comment type="catalytic activity">
    <reaction>
        <text>(2Z,6E)-farnesyl diphosphate + 7 isopentenyl diphosphate = (2Z,6Z,10Z,14Z,18Z,22Z,26Z,30Z,34E)-decaprenyl diphosphate + 7 diphosphate</text>
        <dbReference type="Rhea" id="RHEA:47096"/>
        <dbReference type="ChEBI" id="CHEBI:33019"/>
        <dbReference type="ChEBI" id="CHEBI:87356"/>
        <dbReference type="ChEBI" id="CHEBI:128769"/>
        <dbReference type="ChEBI" id="CHEBI:162247"/>
        <dbReference type="EC" id="2.5.1.86"/>
    </reaction>
</comment>
<comment type="catalytic activity">
    <reaction>
        <text>n isopentenyl diphosphate + (2E,6E)-farnesyl diphosphate = a di-trans,poly-cis-polyprenyl diphosphate + n diphosphate</text>
        <dbReference type="Rhea" id="RHEA:53008"/>
        <dbReference type="Rhea" id="RHEA-COMP:19494"/>
        <dbReference type="ChEBI" id="CHEBI:33019"/>
        <dbReference type="ChEBI" id="CHEBI:128769"/>
        <dbReference type="ChEBI" id="CHEBI:136960"/>
        <dbReference type="ChEBI" id="CHEBI:175763"/>
        <dbReference type="EC" id="2.5.1.87"/>
    </reaction>
</comment>
<comment type="cofactor">
    <cofactor evidence="1">
        <name>Mg(2+)</name>
        <dbReference type="ChEBI" id="CHEBI:18420"/>
    </cofactor>
    <text evidence="1">Binds 2 magnesium ions per subunit.</text>
</comment>
<comment type="subunit">
    <text evidence="1">Homodimer.</text>
</comment>
<comment type="subcellular location">
    <subcellularLocation>
        <location evidence="1">Cell membrane</location>
    </subcellularLocation>
</comment>
<comment type="similarity">
    <text evidence="3">Belongs to the UPP synthase family.</text>
</comment>
<reference key="1">
    <citation type="journal article" date="2002" name="J. Bacteriol.">
        <title>Whole-genome comparison of Mycobacterium tuberculosis clinical and laboratory strains.</title>
        <authorList>
            <person name="Fleischmann R.D."/>
            <person name="Alland D."/>
            <person name="Eisen J.A."/>
            <person name="Carpenter L."/>
            <person name="White O."/>
            <person name="Peterson J.D."/>
            <person name="DeBoy R.T."/>
            <person name="Dodson R.J."/>
            <person name="Gwinn M.L."/>
            <person name="Haft D.H."/>
            <person name="Hickey E.K."/>
            <person name="Kolonay J.F."/>
            <person name="Nelson W.C."/>
            <person name="Umayam L.A."/>
            <person name="Ermolaeva M.D."/>
            <person name="Salzberg S.L."/>
            <person name="Delcher A."/>
            <person name="Utterback T.R."/>
            <person name="Weidman J.F."/>
            <person name="Khouri H.M."/>
            <person name="Gill J."/>
            <person name="Mikula A."/>
            <person name="Bishai W."/>
            <person name="Jacobs W.R. Jr."/>
            <person name="Venter J.C."/>
            <person name="Fraser C.M."/>
        </authorList>
    </citation>
    <scope>NUCLEOTIDE SEQUENCE [LARGE SCALE GENOMIC DNA]</scope>
    <source>
        <strain>CDC 1551 / Oshkosh</strain>
    </source>
</reference>